<reference key="1">
    <citation type="journal article" date="1994" name="EMBO J.">
        <title>PIK1, an essential phosphatidylinositol 4-kinase associated with the yeast nucleus.</title>
        <authorList>
            <person name="Garcia-Bustos J.F."/>
            <person name="Marini F."/>
            <person name="Stevenson I."/>
            <person name="Frei C."/>
            <person name="Hall M.N."/>
        </authorList>
    </citation>
    <scope>NUCLEOTIDE SEQUENCE [GENOMIC DNA]</scope>
    <scope>FUNCTION</scope>
    <scope>CATALYTIC ACTIVITY</scope>
    <scope>SUBCELLULAR LOCATION</scope>
    <source>
        <strain>JK9-3D</strain>
    </source>
</reference>
<reference key="2">
    <citation type="journal article" date="1993" name="Science">
        <title>Phosphatidylinositol 4-kinase: gene structure and requirement for yeast cell viability.</title>
        <authorList>
            <person name="Flanagan C.A."/>
            <person name="Schnieders E.A."/>
            <person name="Emerick A.W."/>
            <person name="Kunisawa R."/>
            <person name="Admon A."/>
            <person name="Thorner J."/>
        </authorList>
    </citation>
    <scope>NUCLEOTIDE SEQUENCE [GENOMIC DNA]</scope>
    <scope>FUNCTION</scope>
    <scope>CATALYTIC ACTIVITY</scope>
</reference>
<reference key="3">
    <citation type="journal article" date="1996" name="Yeast">
        <title>The sequence of a 24,152 bp segment from the left arm of chromosome XIV from Saccharomyces cerevisiae between the BNI1 and the POL2 genes.</title>
        <authorList>
            <person name="Sen-Gupta M."/>
            <person name="Lyck R."/>
            <person name="Fleig U."/>
            <person name="Niedenthal R.K."/>
            <person name="Hegemann J.H."/>
        </authorList>
    </citation>
    <scope>NUCLEOTIDE SEQUENCE [GENOMIC DNA]</scope>
    <source>
        <strain>ATCC 96604 / S288c / FY1679</strain>
    </source>
</reference>
<reference key="4">
    <citation type="journal article" date="1997" name="Nature">
        <title>The nucleotide sequence of Saccharomyces cerevisiae chromosome XIV and its evolutionary implications.</title>
        <authorList>
            <person name="Philippsen P."/>
            <person name="Kleine K."/>
            <person name="Poehlmann R."/>
            <person name="Duesterhoeft A."/>
            <person name="Hamberg K."/>
            <person name="Hegemann J.H."/>
            <person name="Obermaier B."/>
            <person name="Urrestarazu L.A."/>
            <person name="Aert R."/>
            <person name="Albermann K."/>
            <person name="Altmann R."/>
            <person name="Andre B."/>
            <person name="Baladron V."/>
            <person name="Ballesta J.P.G."/>
            <person name="Becam A.-M."/>
            <person name="Beinhauer J.D."/>
            <person name="Boskovic J."/>
            <person name="Buitrago M.J."/>
            <person name="Bussereau F."/>
            <person name="Coster F."/>
            <person name="Crouzet M."/>
            <person name="D'Angelo M."/>
            <person name="Dal Pero F."/>
            <person name="De Antoni A."/>
            <person name="del Rey F."/>
            <person name="Doignon F."/>
            <person name="Domdey H."/>
            <person name="Dubois E."/>
            <person name="Fiedler T.A."/>
            <person name="Fleig U."/>
            <person name="Floeth M."/>
            <person name="Fritz C."/>
            <person name="Gaillardin C."/>
            <person name="Garcia-Cantalejo J.M."/>
            <person name="Glansdorff N."/>
            <person name="Goffeau A."/>
            <person name="Gueldener U."/>
            <person name="Herbert C.J."/>
            <person name="Heumann K."/>
            <person name="Heuss-Neitzel D."/>
            <person name="Hilbert H."/>
            <person name="Hinni K."/>
            <person name="Iraqui Houssaini I."/>
            <person name="Jacquet M."/>
            <person name="Jimenez A."/>
            <person name="Jonniaux J.-L."/>
            <person name="Karpfinger-Hartl L."/>
            <person name="Lanfranchi G."/>
            <person name="Lepingle A."/>
            <person name="Levesque H."/>
            <person name="Lyck R."/>
            <person name="Maftahi M."/>
            <person name="Mallet L."/>
            <person name="Maurer C.T.C."/>
            <person name="Messenguy F."/>
            <person name="Mewes H.-W."/>
            <person name="Moestl D."/>
            <person name="Nasr F."/>
            <person name="Nicaud J.-M."/>
            <person name="Niedenthal R.K."/>
            <person name="Pandolfo D."/>
            <person name="Pierard A."/>
            <person name="Piravandi E."/>
            <person name="Planta R.J."/>
            <person name="Pohl T.M."/>
            <person name="Purnelle B."/>
            <person name="Rebischung C."/>
            <person name="Remacha M.A."/>
            <person name="Revuelta J.L."/>
            <person name="Rinke M."/>
            <person name="Saiz J.E."/>
            <person name="Sartorello F."/>
            <person name="Scherens B."/>
            <person name="Sen-Gupta M."/>
            <person name="Soler-Mira A."/>
            <person name="Urbanus J.H.M."/>
            <person name="Valle G."/>
            <person name="Van Dyck L."/>
            <person name="Verhasselt P."/>
            <person name="Vierendeels F."/>
            <person name="Vissers S."/>
            <person name="Voet M."/>
            <person name="Volckaert G."/>
            <person name="Wach A."/>
            <person name="Wambutt R."/>
            <person name="Wedler H."/>
            <person name="Zollner A."/>
            <person name="Hani J."/>
        </authorList>
    </citation>
    <scope>NUCLEOTIDE SEQUENCE [LARGE SCALE GENOMIC DNA]</scope>
    <source>
        <strain>ATCC 204508 / S288c</strain>
    </source>
</reference>
<reference key="5">
    <citation type="journal article" date="2014" name="G3 (Bethesda)">
        <title>The reference genome sequence of Saccharomyces cerevisiae: Then and now.</title>
        <authorList>
            <person name="Engel S.R."/>
            <person name="Dietrich F.S."/>
            <person name="Fisk D.G."/>
            <person name="Binkley G."/>
            <person name="Balakrishnan R."/>
            <person name="Costanzo M.C."/>
            <person name="Dwight S.S."/>
            <person name="Hitz B.C."/>
            <person name="Karra K."/>
            <person name="Nash R.S."/>
            <person name="Weng S."/>
            <person name="Wong E.D."/>
            <person name="Lloyd P."/>
            <person name="Skrzypek M.S."/>
            <person name="Miyasato S.R."/>
            <person name="Simison M."/>
            <person name="Cherry J.M."/>
        </authorList>
    </citation>
    <scope>GENOME REANNOTATION</scope>
    <source>
        <strain>ATCC 204508 / S288c</strain>
    </source>
</reference>
<reference key="6">
    <citation type="journal article" date="1999" name="Nat. Cell Biol.">
        <title>Yeast homologue of neuronal frequenin is a regulator of phosphatidylinositol-4-OH kinase.</title>
        <authorList>
            <person name="Hendricks K.B."/>
            <person name="Wang B.Q."/>
            <person name="Schnieders E.A."/>
            <person name="Thorner J."/>
        </authorList>
    </citation>
    <scope>INTERACTION WITH FRQ1</scope>
</reference>
<reference key="7">
    <citation type="journal article" date="2003" name="Nature">
        <title>Global analysis of protein expression in yeast.</title>
        <authorList>
            <person name="Ghaemmaghami S."/>
            <person name="Huh W.-K."/>
            <person name="Bower K."/>
            <person name="Howson R.W."/>
            <person name="Belle A."/>
            <person name="Dephoure N."/>
            <person name="O'Shea E.K."/>
            <person name="Weissman J.S."/>
        </authorList>
    </citation>
    <scope>LEVEL OF PROTEIN EXPRESSION [LARGE SCALE ANALYSIS]</scope>
</reference>
<reference key="8">
    <citation type="journal article" date="2007" name="J. Proteome Res.">
        <title>Large-scale phosphorylation analysis of alpha-factor-arrested Saccharomyces cerevisiae.</title>
        <authorList>
            <person name="Li X."/>
            <person name="Gerber S.A."/>
            <person name="Rudner A.D."/>
            <person name="Beausoleil S.A."/>
            <person name="Haas W."/>
            <person name="Villen J."/>
            <person name="Elias J.E."/>
            <person name="Gygi S.P."/>
        </authorList>
    </citation>
    <scope>PHOSPHORYLATION [LARGE SCALE ANALYSIS] AT SER-236</scope>
    <scope>IDENTIFICATION BY MASS SPECTROMETRY [LARGE SCALE ANALYSIS]</scope>
    <source>
        <strain>ADR376</strain>
    </source>
</reference>
<reference key="9">
    <citation type="journal article" date="2007" name="Proc. Natl. Acad. Sci. U.S.A.">
        <title>Analysis of phosphorylation sites on proteins from Saccharomyces cerevisiae by electron transfer dissociation (ETD) mass spectrometry.</title>
        <authorList>
            <person name="Chi A."/>
            <person name="Huttenhower C."/>
            <person name="Geer L.Y."/>
            <person name="Coon J.J."/>
            <person name="Syka J.E.P."/>
            <person name="Bai D.L."/>
            <person name="Shabanowitz J."/>
            <person name="Burke D.J."/>
            <person name="Troyanskaya O.G."/>
            <person name="Hunt D.F."/>
        </authorList>
    </citation>
    <scope>PHOSPHORYLATION [LARGE SCALE ANALYSIS] AT SER-10; THR-394 AND SER-396</scope>
    <scope>IDENTIFICATION BY MASS SPECTROMETRY [LARGE SCALE ANALYSIS]</scope>
</reference>
<reference key="10">
    <citation type="journal article" date="2008" name="Mol. Cell. Proteomics">
        <title>A multidimensional chromatography technology for in-depth phosphoproteome analysis.</title>
        <authorList>
            <person name="Albuquerque C.P."/>
            <person name="Smolka M.B."/>
            <person name="Payne S.H."/>
            <person name="Bafna V."/>
            <person name="Eng J."/>
            <person name="Zhou H."/>
        </authorList>
    </citation>
    <scope>PHOSPHORYLATION [LARGE SCALE ANALYSIS] AT SER-10; SER-384 AND SER-592</scope>
    <scope>IDENTIFICATION BY MASS SPECTROMETRY [LARGE SCALE ANALYSIS]</scope>
</reference>
<reference key="11">
    <citation type="journal article" date="2009" name="Nat. Cell Biol.">
        <title>Regulation of a Golgi flippase by phosphoinositides and an ArfGEF.</title>
        <authorList>
            <person name="Natarajan P."/>
            <person name="Liu K."/>
            <person name="Patil D.V."/>
            <person name="Sciorra V.A."/>
            <person name="Jackson C.L."/>
            <person name="Graham T.R."/>
        </authorList>
    </citation>
    <scope>FUNCTION</scope>
    <scope>SUBCELLULAR LOCATION</scope>
</reference>
<reference key="12">
    <citation type="journal article" date="2009" name="Science">
        <title>Global analysis of Cdk1 substrate phosphorylation sites provides insights into evolution.</title>
        <authorList>
            <person name="Holt L.J."/>
            <person name="Tuch B.B."/>
            <person name="Villen J."/>
            <person name="Johnson A.D."/>
            <person name="Gygi S.P."/>
            <person name="Morgan D.O."/>
        </authorList>
    </citation>
    <scope>PHOSPHORYLATION [LARGE SCALE ANALYSIS] AT SER-10</scope>
    <scope>IDENTIFICATION BY MASS SPECTROMETRY [LARGE SCALE ANALYSIS]</scope>
</reference>
<reference key="13">
    <citation type="journal article" date="2007" name="J. Biol. Chem.">
        <title>Structural insights into activation of phosphatidylinositol 4-kinase (Pik1) by yeast frequenin (Frq1).</title>
        <authorList>
            <person name="Strahl T."/>
            <person name="Huttner I.G."/>
            <person name="Lusin J.D."/>
            <person name="Osawa M."/>
            <person name="King D."/>
            <person name="Thorner J."/>
            <person name="Ames J.B."/>
        </authorList>
    </citation>
    <scope>STRUCTURE BY NMR OF 121-172</scope>
</reference>
<dbReference type="EC" id="2.7.1.67" evidence="7"/>
<dbReference type="EMBL" id="X76058">
    <property type="protein sequence ID" value="CAA53658.1"/>
    <property type="molecule type" value="Genomic_DNA"/>
</dbReference>
<dbReference type="EMBL" id="L20220">
    <property type="protein sequence ID" value="AAA34873.1"/>
    <property type="molecule type" value="Genomic_DNA"/>
</dbReference>
<dbReference type="EMBL" id="X92494">
    <property type="protein sequence ID" value="CAA63231.1"/>
    <property type="molecule type" value="Genomic_DNA"/>
</dbReference>
<dbReference type="EMBL" id="Z71543">
    <property type="protein sequence ID" value="CAA96174.1"/>
    <property type="molecule type" value="Genomic_DNA"/>
</dbReference>
<dbReference type="EMBL" id="BK006947">
    <property type="protein sequence ID" value="DAA10293.1"/>
    <property type="molecule type" value="Genomic_DNA"/>
</dbReference>
<dbReference type="PIR" id="A49335">
    <property type="entry name" value="A49335"/>
</dbReference>
<dbReference type="RefSeq" id="NP_014132.1">
    <property type="nucleotide sequence ID" value="NM_001183105.1"/>
</dbReference>
<dbReference type="PDB" id="2JU0">
    <property type="method" value="NMR"/>
    <property type="chains" value="B=121-172"/>
</dbReference>
<dbReference type="PDBsum" id="2JU0"/>
<dbReference type="SMR" id="P39104"/>
<dbReference type="BioGRID" id="35573">
    <property type="interactions" value="262"/>
</dbReference>
<dbReference type="DIP" id="DIP-6770N"/>
<dbReference type="FunCoup" id="P39104">
    <property type="interactions" value="965"/>
</dbReference>
<dbReference type="IntAct" id="P39104">
    <property type="interactions" value="14"/>
</dbReference>
<dbReference type="MINT" id="P39104"/>
<dbReference type="STRING" id="4932.YNL267W"/>
<dbReference type="GlyGen" id="P39104">
    <property type="glycosylation" value="1 site, 1 O-linked glycan (1 site)"/>
</dbReference>
<dbReference type="iPTMnet" id="P39104"/>
<dbReference type="PaxDb" id="4932-YNL267W"/>
<dbReference type="PeptideAtlas" id="P39104"/>
<dbReference type="EnsemblFungi" id="YNL267W_mRNA">
    <property type="protein sequence ID" value="YNL267W"/>
    <property type="gene ID" value="YNL267W"/>
</dbReference>
<dbReference type="GeneID" id="855454"/>
<dbReference type="KEGG" id="sce:YNL267W"/>
<dbReference type="AGR" id="SGD:S000005211"/>
<dbReference type="SGD" id="S000005211">
    <property type="gene designation" value="PIK1"/>
</dbReference>
<dbReference type="VEuPathDB" id="FungiDB:YNL267W"/>
<dbReference type="eggNOG" id="KOG0903">
    <property type="taxonomic scope" value="Eukaryota"/>
</dbReference>
<dbReference type="GeneTree" id="ENSGT00550000074892"/>
<dbReference type="HOGENOM" id="CLU_002446_2_0_1"/>
<dbReference type="InParanoid" id="P39104"/>
<dbReference type="OMA" id="ANYFRCE"/>
<dbReference type="OrthoDB" id="10264149at2759"/>
<dbReference type="BioCyc" id="YEAST:YNL267W-MONOMER"/>
<dbReference type="Reactome" id="R-SCE-1660514">
    <property type="pathway name" value="Synthesis of PIPs at the Golgi membrane"/>
</dbReference>
<dbReference type="BioGRID-ORCS" id="855454">
    <property type="hits" value="0 hits in 10 CRISPR screens"/>
</dbReference>
<dbReference type="EvolutionaryTrace" id="P39104"/>
<dbReference type="PRO" id="PR:P39104"/>
<dbReference type="Proteomes" id="UP000002311">
    <property type="component" value="Chromosome XIV"/>
</dbReference>
<dbReference type="RNAct" id="P39104">
    <property type="molecule type" value="protein"/>
</dbReference>
<dbReference type="GO" id="GO:0005737">
    <property type="term" value="C:cytoplasm"/>
    <property type="evidence" value="ECO:0000318"/>
    <property type="project" value="GO_Central"/>
</dbReference>
<dbReference type="GO" id="GO:0016020">
    <property type="term" value="C:membrane"/>
    <property type="evidence" value="ECO:0000318"/>
    <property type="project" value="GO_Central"/>
</dbReference>
<dbReference type="GO" id="GO:0005634">
    <property type="term" value="C:nucleus"/>
    <property type="evidence" value="ECO:0000314"/>
    <property type="project" value="SGD"/>
</dbReference>
<dbReference type="GO" id="GO:0005802">
    <property type="term" value="C:trans-Golgi network"/>
    <property type="evidence" value="ECO:0000314"/>
    <property type="project" value="SGD"/>
</dbReference>
<dbReference type="GO" id="GO:0004430">
    <property type="term" value="F:1-phosphatidylinositol 4-kinase activity"/>
    <property type="evidence" value="ECO:0000314"/>
    <property type="project" value="SGD"/>
</dbReference>
<dbReference type="GO" id="GO:0005524">
    <property type="term" value="F:ATP binding"/>
    <property type="evidence" value="ECO:0007669"/>
    <property type="project" value="UniProtKB-KW"/>
</dbReference>
<dbReference type="GO" id="GO:0006995">
    <property type="term" value="P:cellular response to nitrogen starvation"/>
    <property type="evidence" value="ECO:0000315"/>
    <property type="project" value="SGD"/>
</dbReference>
<dbReference type="GO" id="GO:0006897">
    <property type="term" value="P:endocytosis"/>
    <property type="evidence" value="ECO:0000315"/>
    <property type="project" value="CACAO"/>
</dbReference>
<dbReference type="GO" id="GO:0140504">
    <property type="term" value="P:microlipophagy"/>
    <property type="evidence" value="ECO:0000315"/>
    <property type="project" value="SGD"/>
</dbReference>
<dbReference type="GO" id="GO:0046854">
    <property type="term" value="P:phosphatidylinositol phosphate biosynthetic process"/>
    <property type="evidence" value="ECO:0000314"/>
    <property type="project" value="SGD"/>
</dbReference>
<dbReference type="GO" id="GO:0048015">
    <property type="term" value="P:phosphatidylinositol-mediated signaling"/>
    <property type="evidence" value="ECO:0000318"/>
    <property type="project" value="GO_Central"/>
</dbReference>
<dbReference type="GO" id="GO:2000786">
    <property type="term" value="P:positive regulation of autophagosome assembly"/>
    <property type="evidence" value="ECO:0000315"/>
    <property type="project" value="SGD"/>
</dbReference>
<dbReference type="GO" id="GO:0042998">
    <property type="term" value="P:positive regulation of Golgi to plasma membrane protein transport"/>
    <property type="evidence" value="ECO:0000315"/>
    <property type="project" value="CACAO"/>
</dbReference>
<dbReference type="GO" id="GO:0050714">
    <property type="term" value="P:positive regulation of protein secretion"/>
    <property type="evidence" value="ECO:0000315"/>
    <property type="project" value="CACAO"/>
</dbReference>
<dbReference type="CDD" id="cd05168">
    <property type="entry name" value="PI4Kc_III_beta"/>
    <property type="match status" value="1"/>
</dbReference>
<dbReference type="FunFam" id="1.25.40.70:FF:000020">
    <property type="entry name" value="Phosphatidylinositol 4-kinase"/>
    <property type="match status" value="1"/>
</dbReference>
<dbReference type="FunFam" id="3.30.1010.10:FF:000021">
    <property type="entry name" value="Phosphatidylinositol 4-kinase"/>
    <property type="match status" value="1"/>
</dbReference>
<dbReference type="FunFam" id="1.10.1070.11:FF:000016">
    <property type="entry name" value="PIK1p Phosphatidylinositol 4-kinase"/>
    <property type="match status" value="1"/>
</dbReference>
<dbReference type="Gene3D" id="6.10.140.1260">
    <property type="match status" value="1"/>
</dbReference>
<dbReference type="Gene3D" id="1.10.1070.11">
    <property type="entry name" value="Phosphatidylinositol 3-/4-kinase, catalytic domain"/>
    <property type="match status" value="1"/>
</dbReference>
<dbReference type="Gene3D" id="3.30.1010.10">
    <property type="entry name" value="Phosphatidylinositol 3-kinase Catalytic Subunit, Chain A, domain 4"/>
    <property type="match status" value="1"/>
</dbReference>
<dbReference type="Gene3D" id="1.25.40.70">
    <property type="entry name" value="Phosphatidylinositol 3-kinase, accessory domain (PIK)"/>
    <property type="match status" value="1"/>
</dbReference>
<dbReference type="InterPro" id="IPR016024">
    <property type="entry name" value="ARM-type_fold"/>
</dbReference>
<dbReference type="InterPro" id="IPR011009">
    <property type="entry name" value="Kinase-like_dom_sf"/>
</dbReference>
<dbReference type="InterPro" id="IPR021601">
    <property type="entry name" value="Phosphatidylino_kinase_fungi"/>
</dbReference>
<dbReference type="InterPro" id="IPR000403">
    <property type="entry name" value="PI3/4_kinase_cat_dom"/>
</dbReference>
<dbReference type="InterPro" id="IPR036940">
    <property type="entry name" value="PI3/4_kinase_cat_sf"/>
</dbReference>
<dbReference type="InterPro" id="IPR018936">
    <property type="entry name" value="PI3/4_kinase_CS"/>
</dbReference>
<dbReference type="InterPro" id="IPR001263">
    <property type="entry name" value="PI3K_accessory_dom"/>
</dbReference>
<dbReference type="InterPro" id="IPR042236">
    <property type="entry name" value="PI3K_accessory_sf"/>
</dbReference>
<dbReference type="InterPro" id="IPR049160">
    <property type="entry name" value="PI4KB-PIK1_PIK"/>
</dbReference>
<dbReference type="InterPro" id="IPR015433">
    <property type="entry name" value="PI_Kinase"/>
</dbReference>
<dbReference type="PANTHER" id="PTHR10048:SF22">
    <property type="entry name" value="PHOSPHATIDYLINOSITOL 4-KINASE BETA"/>
    <property type="match status" value="1"/>
</dbReference>
<dbReference type="PANTHER" id="PTHR10048">
    <property type="entry name" value="PHOSPHATIDYLINOSITOL KINASE"/>
    <property type="match status" value="1"/>
</dbReference>
<dbReference type="Pfam" id="PF00454">
    <property type="entry name" value="PI3_PI4_kinase"/>
    <property type="match status" value="1"/>
</dbReference>
<dbReference type="Pfam" id="PF21245">
    <property type="entry name" value="PI4KB-PIK1_PIK"/>
    <property type="match status" value="1"/>
</dbReference>
<dbReference type="Pfam" id="PF11522">
    <property type="entry name" value="Pik1"/>
    <property type="match status" value="1"/>
</dbReference>
<dbReference type="SMART" id="SM00146">
    <property type="entry name" value="PI3Kc"/>
    <property type="match status" value="1"/>
</dbReference>
<dbReference type="SUPFAM" id="SSF48371">
    <property type="entry name" value="ARM repeat"/>
    <property type="match status" value="1"/>
</dbReference>
<dbReference type="SUPFAM" id="SSF56112">
    <property type="entry name" value="Protein kinase-like (PK-like)"/>
    <property type="match status" value="1"/>
</dbReference>
<dbReference type="PROSITE" id="PS00915">
    <property type="entry name" value="PI3_4_KINASE_1"/>
    <property type="match status" value="1"/>
</dbReference>
<dbReference type="PROSITE" id="PS00916">
    <property type="entry name" value="PI3_4_KINASE_2"/>
    <property type="match status" value="1"/>
</dbReference>
<dbReference type="PROSITE" id="PS50290">
    <property type="entry name" value="PI3_4_KINASE_3"/>
    <property type="match status" value="1"/>
</dbReference>
<dbReference type="PROSITE" id="PS51545">
    <property type="entry name" value="PIK_HELICAL"/>
    <property type="match status" value="1"/>
</dbReference>
<gene>
    <name evidence="9" type="primary">PIK1</name>
    <name type="ordered locus">YNL267W</name>
    <name type="ORF">N0795</name>
</gene>
<accession>P39104</accession>
<accession>D6W0S7</accession>
<sequence length="1066" mass="119923">MHKASSSKKSFDDTIELKKNEQLLKLINSSEFTLHNCVELLCKHSENIGIHYYLCQKLATFPHSELQFYIPQLVQVLVTMETESMALEDLLLRLRAENPHFALLTFWQLQALLTDLSTDPASYGFQVARRVLNNLQTNLFNTSSGSDKNVKIHENVAPALVLSSMIMSAIAFPQLSEVTKPLVESQGRRQKAFVFKLARSAMKDFTKNMTLKNTLLNKKTSRSKRVSSNRSSTPTSPIDLIDPIKTKEDASFRKSRHSEVKLDFDIVDDIGNQVFEERISSSIKLPKRKPKYLDNSYVHRTYDGKNINRDGSISNTAKALDGNKGDYISPKGRNDENNEIGNNEDETGGETEEDADALNSDHFTSSMPDLHNIQPRTSSASSASLEGTPKLNRTNSQPLSRQAFKNSKKANSSLSQEIDLSQLSTTSKIKMLKANYFRCETQFAIALETISQRLARVPTEARLSALRAELFLLNRDLPAEVDIPTLLPPNKKGKLHKLVTITANEAQVLNSAEKVPYLLLIEYLRDEFDFDPTSETNERLLKKISGNQGGLIFDLNYMNRKENNENRNESTLTSNNTRSSVYDSNSFNNGASRNEGLSSTSRSDSASTAHVRTEVNKEEDLGDMSMVKVRNRTDDEAYRNALVIQSAANVPILPDDSQDRSPELNFGSNLDEVLIENGINSKNIHSQTDALADQMRVSAVMLAQLDKSPQQLSESTKQIRAQIISSMKEVQDKFGYHDLEALHGMAGERKLENDLMTGGIDTSYLGEDWATKKERIRKTSEYGHFENWDLCSVIAKTGDDLRQEAFAYQMIQAMANIWVKEKVDVWVKRMKILITSANTGLVETITNAMSVHSIKKALTKKMIEDAELDDKGGIASLNDHFLRAFGNPNGFKYRRAQDNFASSLAAYSVICYLLQVKDRHNGNIMIDNEGHVSHIDFGFMLSNSPGSVGFEAAPFKLTYEYIELLGGVEGEAFKKFVELTKSSFKALRKYADQIVSMCEIMQKDNMQPCFDAGEQTSVQLRQRFQLDLSEKEVDDFVENFLIGKSLGSIYTRIYDQFQLITQGIYS</sequence>
<organism>
    <name type="scientific">Saccharomyces cerevisiae (strain ATCC 204508 / S288c)</name>
    <name type="common">Baker's yeast</name>
    <dbReference type="NCBI Taxonomy" id="559292"/>
    <lineage>
        <taxon>Eukaryota</taxon>
        <taxon>Fungi</taxon>
        <taxon>Dikarya</taxon>
        <taxon>Ascomycota</taxon>
        <taxon>Saccharomycotina</taxon>
        <taxon>Saccharomycetes</taxon>
        <taxon>Saccharomycetales</taxon>
        <taxon>Saccharomycetaceae</taxon>
        <taxon>Saccharomyces</taxon>
    </lineage>
</organism>
<proteinExistence type="evidence at protein level"/>
<comment type="function">
    <text evidence="6 7 8">Acts on phosphatidylinositol (PI) in the first committed step in the production of the second messenger inositol 1,4,5,-trisphosphate (PubMed:19898464, PubMed:8194527, PubMed:8248783). PIK1 is part of a nuclear phosphoinositide cycle and could control cytokinesis through the actin cytoskeleton (PubMed:8194527). Involved in the response to mating pheromone (PubMed:8248783).</text>
</comment>
<comment type="catalytic activity">
    <reaction evidence="7 8">
        <text>a 1,2-diacyl-sn-glycero-3-phospho-(1D-myo-inositol) + ATP = a 1,2-diacyl-sn-glycero-3-phospho-(1D-myo-inositol 4-phosphate) + ADP + H(+)</text>
        <dbReference type="Rhea" id="RHEA:19877"/>
        <dbReference type="ChEBI" id="CHEBI:15378"/>
        <dbReference type="ChEBI" id="CHEBI:30616"/>
        <dbReference type="ChEBI" id="CHEBI:57880"/>
        <dbReference type="ChEBI" id="CHEBI:58178"/>
        <dbReference type="ChEBI" id="CHEBI:456216"/>
        <dbReference type="EC" id="2.7.1.67"/>
    </reaction>
</comment>
<comment type="subunit">
    <text evidence="4">Interacts with FRQ1.</text>
</comment>
<comment type="interaction">
    <interactant intactId="EBI-13423">
        <id>P39104</id>
    </interactant>
    <interactant intactId="EBI-11946">
        <id>Q06389</id>
        <label>FRQ1</label>
    </interactant>
    <organismsDiffer>false</organismsDiffer>
    <experiments>4</experiments>
</comment>
<comment type="interaction">
    <interactant intactId="EBI-13423">
        <id>P39104</id>
    </interactant>
    <interactant intactId="EBI-7569">
        <id>P38817</id>
        <label>GGA2</label>
    </interactant>
    <organismsDiffer>false</organismsDiffer>
    <experiments>3</experiments>
</comment>
<comment type="subcellular location">
    <subcellularLocation>
        <location evidence="7">Nucleus</location>
    </subcellularLocation>
    <subcellularLocation>
        <location evidence="6">Golgi apparatus</location>
        <location evidence="6">trans-Golgi network</location>
    </subcellularLocation>
</comment>
<comment type="miscellaneous">
    <text evidence="5">Present with 1600 molecules/cell in log phase SD medium.</text>
</comment>
<comment type="similarity">
    <text evidence="10">Belongs to the PI3/PI4-kinase family. Type III PI4K subfamily.</text>
</comment>
<name>PIK1_YEAST</name>
<feature type="chain" id="PRO_0000088834" description="Phosphatidylinositol 4-kinase PIK1">
    <location>
        <begin position="1"/>
        <end position="1066"/>
    </location>
</feature>
<feature type="domain" description="PIK helical" evidence="2">
    <location>
        <begin position="1"/>
        <end position="133"/>
    </location>
</feature>
<feature type="domain" description="PI3K/PI4K catalytic" evidence="1">
    <location>
        <begin position="770"/>
        <end position="1049"/>
    </location>
</feature>
<feature type="region of interest" description="Disordered" evidence="3">
    <location>
        <begin position="218"/>
        <end position="240"/>
    </location>
</feature>
<feature type="region of interest" description="Disordered" evidence="3">
    <location>
        <begin position="303"/>
        <end position="411"/>
    </location>
</feature>
<feature type="region of interest" description="Disordered" evidence="3">
    <location>
        <begin position="564"/>
        <end position="624"/>
    </location>
</feature>
<feature type="region of interest" description="G-loop" evidence="1">
    <location>
        <begin position="776"/>
        <end position="782"/>
    </location>
</feature>
<feature type="region of interest" description="Catalytic loop" evidence="1">
    <location>
        <begin position="915"/>
        <end position="923"/>
    </location>
</feature>
<feature type="region of interest" description="Activation loop" evidence="1">
    <location>
        <begin position="934"/>
        <end position="958"/>
    </location>
</feature>
<feature type="compositionally biased region" description="Acidic residues" evidence="3">
    <location>
        <begin position="342"/>
        <end position="356"/>
    </location>
</feature>
<feature type="compositionally biased region" description="Polar residues" evidence="3">
    <location>
        <begin position="374"/>
        <end position="411"/>
    </location>
</feature>
<feature type="compositionally biased region" description="Polar residues" evidence="3">
    <location>
        <begin position="570"/>
        <end position="597"/>
    </location>
</feature>
<feature type="compositionally biased region" description="Low complexity" evidence="3">
    <location>
        <begin position="598"/>
        <end position="609"/>
    </location>
</feature>
<feature type="modified residue" description="Phosphoserine" evidence="11 13 14">
    <location>
        <position position="10"/>
    </location>
</feature>
<feature type="modified residue" description="Phosphoserine" evidence="12">
    <location>
        <position position="236"/>
    </location>
</feature>
<feature type="modified residue" description="Phosphoserine" evidence="13">
    <location>
        <position position="384"/>
    </location>
</feature>
<feature type="modified residue" description="Phosphothreonine" evidence="11">
    <location>
        <position position="394"/>
    </location>
</feature>
<feature type="modified residue" description="Phosphoserine" evidence="11">
    <location>
        <position position="396"/>
    </location>
</feature>
<feature type="modified residue" description="Phosphoserine" evidence="13">
    <location>
        <position position="592"/>
    </location>
</feature>
<feature type="helix" evidence="15">
    <location>
        <begin position="126"/>
        <end position="135"/>
    </location>
</feature>
<feature type="helix" evidence="15">
    <location>
        <begin position="156"/>
        <end position="168"/>
    </location>
</feature>
<evidence type="ECO:0000255" key="1">
    <source>
        <dbReference type="PROSITE-ProRule" id="PRU00269"/>
    </source>
</evidence>
<evidence type="ECO:0000255" key="2">
    <source>
        <dbReference type="PROSITE-ProRule" id="PRU00878"/>
    </source>
</evidence>
<evidence type="ECO:0000256" key="3">
    <source>
        <dbReference type="SAM" id="MobiDB-lite"/>
    </source>
</evidence>
<evidence type="ECO:0000269" key="4">
    <source>
    </source>
</evidence>
<evidence type="ECO:0000269" key="5">
    <source>
    </source>
</evidence>
<evidence type="ECO:0000269" key="6">
    <source>
    </source>
</evidence>
<evidence type="ECO:0000269" key="7">
    <source>
    </source>
</evidence>
<evidence type="ECO:0000269" key="8">
    <source>
    </source>
</evidence>
<evidence type="ECO:0000303" key="9">
    <source>
    </source>
</evidence>
<evidence type="ECO:0000305" key="10"/>
<evidence type="ECO:0007744" key="11">
    <source>
    </source>
</evidence>
<evidence type="ECO:0007744" key="12">
    <source>
    </source>
</evidence>
<evidence type="ECO:0007744" key="13">
    <source>
    </source>
</evidence>
<evidence type="ECO:0007744" key="14">
    <source>
    </source>
</evidence>
<evidence type="ECO:0007829" key="15">
    <source>
        <dbReference type="PDB" id="2JU0"/>
    </source>
</evidence>
<keyword id="KW-0002">3D-structure</keyword>
<keyword id="KW-0067">ATP-binding</keyword>
<keyword id="KW-0333">Golgi apparatus</keyword>
<keyword id="KW-0418">Kinase</keyword>
<keyword id="KW-0547">Nucleotide-binding</keyword>
<keyword id="KW-0539">Nucleus</keyword>
<keyword id="KW-0597">Phosphoprotein</keyword>
<keyword id="KW-1185">Reference proteome</keyword>
<keyword id="KW-0808">Transferase</keyword>
<protein>
    <recommendedName>
        <fullName evidence="9">Phosphatidylinositol 4-kinase PIK1</fullName>
        <shortName evidence="9">PI4-kinase</shortName>
        <shortName evidence="9">PtdIns-4-kinase</shortName>
        <ecNumber evidence="7">2.7.1.67</ecNumber>
    </recommendedName>
</protein>